<feature type="chain" id="PRO_1000140813" description="Small ribosomal subunit protein uS4">
    <location>
        <begin position="1"/>
        <end position="208"/>
    </location>
</feature>
<feature type="domain" description="S4 RNA-binding" evidence="1">
    <location>
        <begin position="99"/>
        <end position="161"/>
    </location>
</feature>
<feature type="region of interest" description="Disordered" evidence="2">
    <location>
        <begin position="32"/>
        <end position="53"/>
    </location>
</feature>
<protein>
    <recommendedName>
        <fullName evidence="1">Small ribosomal subunit protein uS4</fullName>
    </recommendedName>
    <alternativeName>
        <fullName evidence="3">30S ribosomal protein S4</fullName>
    </alternativeName>
</protein>
<sequence length="208" mass="23747">MSRYLGSVCKLCRREKEKLFLKGERCSSNCALNRKRGKNSPGQHGASKVKMSDYAKHLREKQKARRMYGLTEEQFSNYYKTAEKMKGSAGDNLLKLLELRLDNVVYRLGLASSKKMARQIVNHGNILVNEKKIDVPRYRLKIGDVITFPEKYKSNVIIKKLIEKMVSSIPAWLSFDKSRIAGTVVSEPLAGETSHPINSQLIVEYYSK</sequence>
<accession>B1GZA9</accession>
<comment type="function">
    <text evidence="1">One of the primary rRNA binding proteins, it binds directly to 16S rRNA where it nucleates assembly of the body of the 30S subunit.</text>
</comment>
<comment type="function">
    <text evidence="1">With S5 and S12 plays an important role in translational accuracy.</text>
</comment>
<comment type="subunit">
    <text evidence="1">Part of the 30S ribosomal subunit. Contacts protein S5. The interaction surface between S4 and S5 is involved in control of translational fidelity.</text>
</comment>
<comment type="similarity">
    <text evidence="1">Belongs to the universal ribosomal protein uS4 family.</text>
</comment>
<gene>
    <name evidence="1" type="primary">rpsD</name>
    <name type="ordered locus">TGRD_108</name>
</gene>
<reference key="1">
    <citation type="journal article" date="2008" name="Proc. Natl. Acad. Sci. U.S.A.">
        <title>Complete genome of the uncultured termite group 1 bacteria in a single host protist cell.</title>
        <authorList>
            <person name="Hongoh Y."/>
            <person name="Sharma V.K."/>
            <person name="Prakash T."/>
            <person name="Noda S."/>
            <person name="Taylor T.D."/>
            <person name="Kudo T."/>
            <person name="Sakaki Y."/>
            <person name="Toyoda A."/>
            <person name="Hattori M."/>
            <person name="Ohkuma M."/>
        </authorList>
    </citation>
    <scope>NUCLEOTIDE SEQUENCE [LARGE SCALE GENOMIC DNA]</scope>
</reference>
<evidence type="ECO:0000255" key="1">
    <source>
        <dbReference type="HAMAP-Rule" id="MF_01306"/>
    </source>
</evidence>
<evidence type="ECO:0000256" key="2">
    <source>
        <dbReference type="SAM" id="MobiDB-lite"/>
    </source>
</evidence>
<evidence type="ECO:0000305" key="3"/>
<dbReference type="EMBL" id="AP009510">
    <property type="protein sequence ID" value="BAG13591.1"/>
    <property type="molecule type" value="Genomic_DNA"/>
</dbReference>
<dbReference type="RefSeq" id="WP_015423120.1">
    <property type="nucleotide sequence ID" value="NC_020419.1"/>
</dbReference>
<dbReference type="SMR" id="B1GZA9"/>
<dbReference type="STRING" id="471821.TGRD_108"/>
<dbReference type="KEGG" id="eti:RSTT_093"/>
<dbReference type="KEGG" id="rsd:TGRD_108"/>
<dbReference type="PATRIC" id="fig|471821.5.peg.152"/>
<dbReference type="HOGENOM" id="CLU_092403_0_4_0"/>
<dbReference type="OrthoDB" id="9803672at2"/>
<dbReference type="Proteomes" id="UP000001691">
    <property type="component" value="Chromosome"/>
</dbReference>
<dbReference type="GO" id="GO:0015935">
    <property type="term" value="C:small ribosomal subunit"/>
    <property type="evidence" value="ECO:0007669"/>
    <property type="project" value="InterPro"/>
</dbReference>
<dbReference type="GO" id="GO:0019843">
    <property type="term" value="F:rRNA binding"/>
    <property type="evidence" value="ECO:0007669"/>
    <property type="project" value="UniProtKB-UniRule"/>
</dbReference>
<dbReference type="GO" id="GO:0003735">
    <property type="term" value="F:structural constituent of ribosome"/>
    <property type="evidence" value="ECO:0007669"/>
    <property type="project" value="InterPro"/>
</dbReference>
<dbReference type="GO" id="GO:0042274">
    <property type="term" value="P:ribosomal small subunit biogenesis"/>
    <property type="evidence" value="ECO:0007669"/>
    <property type="project" value="TreeGrafter"/>
</dbReference>
<dbReference type="GO" id="GO:0006412">
    <property type="term" value="P:translation"/>
    <property type="evidence" value="ECO:0007669"/>
    <property type="project" value="UniProtKB-UniRule"/>
</dbReference>
<dbReference type="CDD" id="cd00165">
    <property type="entry name" value="S4"/>
    <property type="match status" value="1"/>
</dbReference>
<dbReference type="FunFam" id="3.10.290.10:FF:000001">
    <property type="entry name" value="30S ribosomal protein S4"/>
    <property type="match status" value="1"/>
</dbReference>
<dbReference type="Gene3D" id="1.10.1050.10">
    <property type="entry name" value="Ribosomal Protein S4 Delta 41, Chain A, domain 1"/>
    <property type="match status" value="1"/>
</dbReference>
<dbReference type="Gene3D" id="3.10.290.10">
    <property type="entry name" value="RNA-binding S4 domain"/>
    <property type="match status" value="1"/>
</dbReference>
<dbReference type="HAMAP" id="MF_01306_B">
    <property type="entry name" value="Ribosomal_uS4_B"/>
    <property type="match status" value="1"/>
</dbReference>
<dbReference type="InterPro" id="IPR022801">
    <property type="entry name" value="Ribosomal_uS4"/>
</dbReference>
<dbReference type="InterPro" id="IPR005709">
    <property type="entry name" value="Ribosomal_uS4_bac-type"/>
</dbReference>
<dbReference type="InterPro" id="IPR018079">
    <property type="entry name" value="Ribosomal_uS4_CS"/>
</dbReference>
<dbReference type="InterPro" id="IPR001912">
    <property type="entry name" value="Ribosomal_uS4_N"/>
</dbReference>
<dbReference type="InterPro" id="IPR002942">
    <property type="entry name" value="S4_RNA-bd"/>
</dbReference>
<dbReference type="InterPro" id="IPR036986">
    <property type="entry name" value="S4_RNA-bd_sf"/>
</dbReference>
<dbReference type="NCBIfam" id="NF003717">
    <property type="entry name" value="PRK05327.1"/>
    <property type="match status" value="1"/>
</dbReference>
<dbReference type="NCBIfam" id="TIGR01017">
    <property type="entry name" value="rpsD_bact"/>
    <property type="match status" value="1"/>
</dbReference>
<dbReference type="PANTHER" id="PTHR11831">
    <property type="entry name" value="30S 40S RIBOSOMAL PROTEIN"/>
    <property type="match status" value="1"/>
</dbReference>
<dbReference type="PANTHER" id="PTHR11831:SF4">
    <property type="entry name" value="SMALL RIBOSOMAL SUBUNIT PROTEIN US4M"/>
    <property type="match status" value="1"/>
</dbReference>
<dbReference type="Pfam" id="PF00163">
    <property type="entry name" value="Ribosomal_S4"/>
    <property type="match status" value="1"/>
</dbReference>
<dbReference type="Pfam" id="PF01479">
    <property type="entry name" value="S4"/>
    <property type="match status" value="1"/>
</dbReference>
<dbReference type="SMART" id="SM01390">
    <property type="entry name" value="Ribosomal_S4"/>
    <property type="match status" value="1"/>
</dbReference>
<dbReference type="SMART" id="SM00363">
    <property type="entry name" value="S4"/>
    <property type="match status" value="1"/>
</dbReference>
<dbReference type="SUPFAM" id="SSF55174">
    <property type="entry name" value="Alpha-L RNA-binding motif"/>
    <property type="match status" value="1"/>
</dbReference>
<dbReference type="PROSITE" id="PS00632">
    <property type="entry name" value="RIBOSOMAL_S4"/>
    <property type="match status" value="1"/>
</dbReference>
<dbReference type="PROSITE" id="PS50889">
    <property type="entry name" value="S4"/>
    <property type="match status" value="1"/>
</dbReference>
<organism>
    <name type="scientific">Endomicrobium trichonymphae</name>
    <dbReference type="NCBI Taxonomy" id="1408204"/>
    <lineage>
        <taxon>Bacteria</taxon>
        <taxon>Pseudomonadati</taxon>
        <taxon>Elusimicrobiota</taxon>
        <taxon>Endomicrobiia</taxon>
        <taxon>Endomicrobiales</taxon>
        <taxon>Endomicrobiaceae</taxon>
        <taxon>Candidatus Endomicrobiellum</taxon>
    </lineage>
</organism>
<name>RS4_ENDTX</name>
<keyword id="KW-0687">Ribonucleoprotein</keyword>
<keyword id="KW-0689">Ribosomal protein</keyword>
<keyword id="KW-0694">RNA-binding</keyword>
<keyword id="KW-0699">rRNA-binding</keyword>
<proteinExistence type="inferred from homology"/>